<gene>
    <name evidence="1" type="primary">rpsQ</name>
    <name type="ordered locus">Gbem_0942</name>
</gene>
<evidence type="ECO:0000255" key="1">
    <source>
        <dbReference type="HAMAP-Rule" id="MF_01345"/>
    </source>
</evidence>
<evidence type="ECO:0000305" key="2"/>
<comment type="function">
    <text evidence="1">One of the primary rRNA binding proteins, it binds specifically to the 5'-end of 16S ribosomal RNA.</text>
</comment>
<comment type="subunit">
    <text evidence="1">Part of the 30S ribosomal subunit.</text>
</comment>
<comment type="similarity">
    <text evidence="1">Belongs to the universal ribosomal protein uS17 family.</text>
</comment>
<proteinExistence type="inferred from homology"/>
<keyword id="KW-1185">Reference proteome</keyword>
<keyword id="KW-0687">Ribonucleoprotein</keyword>
<keyword id="KW-0689">Ribosomal protein</keyword>
<keyword id="KW-0694">RNA-binding</keyword>
<keyword id="KW-0699">rRNA-binding</keyword>
<accession>B5EFQ9</accession>
<reference key="1">
    <citation type="submission" date="2008-07" db="EMBL/GenBank/DDBJ databases">
        <title>Complete sequence of Geobacter bemidjiensis BEM.</title>
        <authorList>
            <consortium name="US DOE Joint Genome Institute"/>
            <person name="Lucas S."/>
            <person name="Copeland A."/>
            <person name="Lapidus A."/>
            <person name="Glavina del Rio T."/>
            <person name="Dalin E."/>
            <person name="Tice H."/>
            <person name="Bruce D."/>
            <person name="Goodwin L."/>
            <person name="Pitluck S."/>
            <person name="Kiss H."/>
            <person name="Brettin T."/>
            <person name="Detter J.C."/>
            <person name="Han C."/>
            <person name="Kuske C.R."/>
            <person name="Schmutz J."/>
            <person name="Larimer F."/>
            <person name="Land M."/>
            <person name="Hauser L."/>
            <person name="Kyrpides N."/>
            <person name="Lykidis A."/>
            <person name="Lovley D."/>
            <person name="Richardson P."/>
        </authorList>
    </citation>
    <scope>NUCLEOTIDE SEQUENCE [LARGE SCALE GENOMIC DNA]</scope>
    <source>
        <strain>ATCC BAA-1014 / DSM 16622 / JCM 12645 / Bem</strain>
    </source>
</reference>
<sequence>MSERGNRKTQVGVVVSDKMDKTAVVKVDRLVKHPVYNKYIKRSAKYKAHDMDNAAKIGDRVLIVETRPLSKDKRWKIRQIIESKG</sequence>
<organism>
    <name type="scientific">Citrifermentans bemidjiense (strain ATCC BAA-1014 / DSM 16622 / JCM 12645 / Bem)</name>
    <name type="common">Geobacter bemidjiensis</name>
    <dbReference type="NCBI Taxonomy" id="404380"/>
    <lineage>
        <taxon>Bacteria</taxon>
        <taxon>Pseudomonadati</taxon>
        <taxon>Thermodesulfobacteriota</taxon>
        <taxon>Desulfuromonadia</taxon>
        <taxon>Geobacterales</taxon>
        <taxon>Geobacteraceae</taxon>
        <taxon>Citrifermentans</taxon>
    </lineage>
</organism>
<protein>
    <recommendedName>
        <fullName evidence="1">Small ribosomal subunit protein uS17</fullName>
    </recommendedName>
    <alternativeName>
        <fullName evidence="2">30S ribosomal protein S17</fullName>
    </alternativeName>
</protein>
<feature type="chain" id="PRO_1000143261" description="Small ribosomal subunit protein uS17">
    <location>
        <begin position="1"/>
        <end position="85"/>
    </location>
</feature>
<name>RS17_CITBB</name>
<dbReference type="EMBL" id="CP001124">
    <property type="protein sequence ID" value="ACH37963.1"/>
    <property type="molecule type" value="Genomic_DNA"/>
</dbReference>
<dbReference type="RefSeq" id="WP_012529375.1">
    <property type="nucleotide sequence ID" value="NC_011146.1"/>
</dbReference>
<dbReference type="SMR" id="B5EFQ9"/>
<dbReference type="STRING" id="404380.Gbem_0942"/>
<dbReference type="KEGG" id="gbm:Gbem_0942"/>
<dbReference type="eggNOG" id="COG0186">
    <property type="taxonomic scope" value="Bacteria"/>
</dbReference>
<dbReference type="HOGENOM" id="CLU_073626_1_0_7"/>
<dbReference type="OrthoDB" id="9811714at2"/>
<dbReference type="Proteomes" id="UP000008825">
    <property type="component" value="Chromosome"/>
</dbReference>
<dbReference type="GO" id="GO:0022627">
    <property type="term" value="C:cytosolic small ribosomal subunit"/>
    <property type="evidence" value="ECO:0007669"/>
    <property type="project" value="TreeGrafter"/>
</dbReference>
<dbReference type="GO" id="GO:0019843">
    <property type="term" value="F:rRNA binding"/>
    <property type="evidence" value="ECO:0007669"/>
    <property type="project" value="UniProtKB-UniRule"/>
</dbReference>
<dbReference type="GO" id="GO:0003735">
    <property type="term" value="F:structural constituent of ribosome"/>
    <property type="evidence" value="ECO:0007669"/>
    <property type="project" value="InterPro"/>
</dbReference>
<dbReference type="GO" id="GO:0006412">
    <property type="term" value="P:translation"/>
    <property type="evidence" value="ECO:0007669"/>
    <property type="project" value="UniProtKB-UniRule"/>
</dbReference>
<dbReference type="CDD" id="cd00364">
    <property type="entry name" value="Ribosomal_uS17"/>
    <property type="match status" value="1"/>
</dbReference>
<dbReference type="Gene3D" id="2.40.50.140">
    <property type="entry name" value="Nucleic acid-binding proteins"/>
    <property type="match status" value="1"/>
</dbReference>
<dbReference type="HAMAP" id="MF_01345_B">
    <property type="entry name" value="Ribosomal_uS17_B"/>
    <property type="match status" value="1"/>
</dbReference>
<dbReference type="InterPro" id="IPR012340">
    <property type="entry name" value="NA-bd_OB-fold"/>
</dbReference>
<dbReference type="InterPro" id="IPR000266">
    <property type="entry name" value="Ribosomal_uS17"/>
</dbReference>
<dbReference type="InterPro" id="IPR019984">
    <property type="entry name" value="Ribosomal_uS17_bact/chlr"/>
</dbReference>
<dbReference type="InterPro" id="IPR019979">
    <property type="entry name" value="Ribosomal_uS17_CS"/>
</dbReference>
<dbReference type="NCBIfam" id="NF004123">
    <property type="entry name" value="PRK05610.1"/>
    <property type="match status" value="1"/>
</dbReference>
<dbReference type="NCBIfam" id="TIGR03635">
    <property type="entry name" value="uS17_bact"/>
    <property type="match status" value="1"/>
</dbReference>
<dbReference type="PANTHER" id="PTHR10744">
    <property type="entry name" value="40S RIBOSOMAL PROTEIN S11 FAMILY MEMBER"/>
    <property type="match status" value="1"/>
</dbReference>
<dbReference type="PANTHER" id="PTHR10744:SF1">
    <property type="entry name" value="SMALL RIBOSOMAL SUBUNIT PROTEIN US17M"/>
    <property type="match status" value="1"/>
</dbReference>
<dbReference type="Pfam" id="PF00366">
    <property type="entry name" value="Ribosomal_S17"/>
    <property type="match status" value="1"/>
</dbReference>
<dbReference type="PRINTS" id="PR00973">
    <property type="entry name" value="RIBOSOMALS17"/>
</dbReference>
<dbReference type="SUPFAM" id="SSF50249">
    <property type="entry name" value="Nucleic acid-binding proteins"/>
    <property type="match status" value="1"/>
</dbReference>
<dbReference type="PROSITE" id="PS00056">
    <property type="entry name" value="RIBOSOMAL_S17"/>
    <property type="match status" value="1"/>
</dbReference>